<evidence type="ECO:0000255" key="1"/>
<evidence type="ECO:0000255" key="2">
    <source>
        <dbReference type="PROSITE-ProRule" id="PRU00521"/>
    </source>
</evidence>
<evidence type="ECO:0000269" key="3">
    <source>
    </source>
</evidence>
<evidence type="ECO:0000305" key="4"/>
<evidence type="ECO:0000312" key="5">
    <source>
        <dbReference type="RGD" id="620798"/>
    </source>
</evidence>
<dbReference type="EMBL" id="AB377275">
    <property type="protein sequence ID" value="BAH03530.1"/>
    <property type="molecule type" value="mRNA"/>
</dbReference>
<dbReference type="EMBL" id="AABR07069239">
    <property type="status" value="NOT_ANNOTATED_CDS"/>
    <property type="molecule type" value="Genomic_DNA"/>
</dbReference>
<dbReference type="EMBL" id="CH473993">
    <property type="protein sequence ID" value="EDL78429.1"/>
    <property type="molecule type" value="Genomic_DNA"/>
</dbReference>
<dbReference type="EMBL" id="U28218">
    <property type="protein sequence ID" value="AAA75003.1"/>
    <property type="molecule type" value="Genomic_DNA"/>
</dbReference>
<dbReference type="RefSeq" id="NP_001094111.1">
    <property type="nucleotide sequence ID" value="NM_001100641.1"/>
</dbReference>
<dbReference type="RefSeq" id="NP_001380770.1">
    <property type="nucleotide sequence ID" value="NM_001393841.1"/>
</dbReference>
<dbReference type="SMR" id="P49287"/>
<dbReference type="FunCoup" id="P49287">
    <property type="interactions" value="186"/>
</dbReference>
<dbReference type="STRING" id="10116.ENSRNOP00000011883"/>
<dbReference type="BindingDB" id="P49287"/>
<dbReference type="ChEMBL" id="CHEMBL2566"/>
<dbReference type="PaxDb" id="10116-ENSRNOP00000011883"/>
<dbReference type="Ensembl" id="ENSRNOT00000011883.5">
    <property type="protein sequence ID" value="ENSRNOP00000011883.4"/>
    <property type="gene ID" value="ENSRNOG00000008972.5"/>
</dbReference>
<dbReference type="GeneID" id="192646"/>
<dbReference type="UCSC" id="RGD:620798">
    <property type="organism name" value="rat"/>
</dbReference>
<dbReference type="AGR" id="RGD:620798"/>
<dbReference type="RGD" id="620798">
    <property type="gene designation" value="Mtnr1b"/>
</dbReference>
<dbReference type="eggNOG" id="KOG3656">
    <property type="taxonomic scope" value="Eukaryota"/>
</dbReference>
<dbReference type="GeneTree" id="ENSGT00940000162341"/>
<dbReference type="HOGENOM" id="CLU_009579_3_3_1"/>
<dbReference type="InParanoid" id="P49287"/>
<dbReference type="OMA" id="WHTPLYI"/>
<dbReference type="OrthoDB" id="10044919at2759"/>
<dbReference type="TreeFam" id="TF331693"/>
<dbReference type="Reactome" id="R-RNO-373076">
    <property type="pathway name" value="Class A/1 (Rhodopsin-like receptors)"/>
</dbReference>
<dbReference type="Reactome" id="R-RNO-418594">
    <property type="pathway name" value="G alpha (i) signalling events"/>
</dbReference>
<dbReference type="PRO" id="PR:P49287"/>
<dbReference type="Proteomes" id="UP000002494">
    <property type="component" value="Chromosome 8"/>
</dbReference>
<dbReference type="Proteomes" id="UP000234681">
    <property type="component" value="Chromosome 8"/>
</dbReference>
<dbReference type="GO" id="GO:0005886">
    <property type="term" value="C:plasma membrane"/>
    <property type="evidence" value="ECO:0000266"/>
    <property type="project" value="RGD"/>
</dbReference>
<dbReference type="GO" id="GO:0004930">
    <property type="term" value="F:G protein-coupled receptor activity"/>
    <property type="evidence" value="ECO:0000318"/>
    <property type="project" value="GO_Central"/>
</dbReference>
<dbReference type="GO" id="GO:0008502">
    <property type="term" value="F:melatonin receptor activity"/>
    <property type="evidence" value="ECO:0000266"/>
    <property type="project" value="RGD"/>
</dbReference>
<dbReference type="GO" id="GO:0043010">
    <property type="term" value="P:camera-type eye development"/>
    <property type="evidence" value="ECO:0000270"/>
    <property type="project" value="RGD"/>
</dbReference>
<dbReference type="GO" id="GO:0007186">
    <property type="term" value="P:G protein-coupled receptor signaling pathway"/>
    <property type="evidence" value="ECO:0000318"/>
    <property type="project" value="GO_Central"/>
</dbReference>
<dbReference type="GO" id="GO:0042593">
    <property type="term" value="P:glucose homeostasis"/>
    <property type="evidence" value="ECO:0000266"/>
    <property type="project" value="RGD"/>
</dbReference>
<dbReference type="GO" id="GO:0010754">
    <property type="term" value="P:negative regulation of cGMP-mediated signaling"/>
    <property type="evidence" value="ECO:0000315"/>
    <property type="project" value="RGD"/>
</dbReference>
<dbReference type="GO" id="GO:0051481">
    <property type="term" value="P:negative regulation of cytosolic calcium ion concentration"/>
    <property type="evidence" value="ECO:0000315"/>
    <property type="project" value="RGD"/>
</dbReference>
<dbReference type="GO" id="GO:0046676">
    <property type="term" value="P:negative regulation of insulin secretion"/>
    <property type="evidence" value="ECO:0000315"/>
    <property type="project" value="RGD"/>
</dbReference>
<dbReference type="GO" id="GO:0043524">
    <property type="term" value="P:negative regulation of neuron apoptotic process"/>
    <property type="evidence" value="ECO:0000314"/>
    <property type="project" value="RGD"/>
</dbReference>
<dbReference type="GO" id="GO:0051970">
    <property type="term" value="P:negative regulation of transmission of nerve impulse"/>
    <property type="evidence" value="ECO:0000315"/>
    <property type="project" value="RGD"/>
</dbReference>
<dbReference type="GO" id="GO:0045906">
    <property type="term" value="P:negative regulation of vasoconstriction"/>
    <property type="evidence" value="ECO:0000315"/>
    <property type="project" value="RGD"/>
</dbReference>
<dbReference type="GO" id="GO:0042753">
    <property type="term" value="P:positive regulation of circadian rhythm"/>
    <property type="evidence" value="ECO:0000314"/>
    <property type="project" value="RGD"/>
</dbReference>
<dbReference type="GO" id="GO:0046010">
    <property type="term" value="P:positive regulation of circadian sleep/wake cycle, non-REM sleep"/>
    <property type="evidence" value="ECO:0000314"/>
    <property type="project" value="RGD"/>
</dbReference>
<dbReference type="GO" id="GO:0051971">
    <property type="term" value="P:positive regulation of transmission of nerve impulse"/>
    <property type="evidence" value="ECO:0000314"/>
    <property type="project" value="RGD"/>
</dbReference>
<dbReference type="GO" id="GO:0050796">
    <property type="term" value="P:regulation of insulin secretion"/>
    <property type="evidence" value="ECO:0000266"/>
    <property type="project" value="RGD"/>
</dbReference>
<dbReference type="GO" id="GO:0098908">
    <property type="term" value="P:regulation of neuronal action potential"/>
    <property type="evidence" value="ECO:0000315"/>
    <property type="project" value="RGD"/>
</dbReference>
<dbReference type="FunFam" id="1.20.1070.10:FF:000056">
    <property type="entry name" value="Melatonin receptor type 1A"/>
    <property type="match status" value="1"/>
</dbReference>
<dbReference type="Gene3D" id="1.20.1070.10">
    <property type="entry name" value="Rhodopsin 7-helix transmembrane proteins"/>
    <property type="match status" value="1"/>
</dbReference>
<dbReference type="InterPro" id="IPR000276">
    <property type="entry name" value="GPCR_Rhodpsn"/>
</dbReference>
<dbReference type="InterPro" id="IPR017452">
    <property type="entry name" value="GPCR_Rhodpsn_7TM"/>
</dbReference>
<dbReference type="InterPro" id="IPR000025">
    <property type="entry name" value="Melatonin_rcpt"/>
</dbReference>
<dbReference type="PANTHER" id="PTHR24228">
    <property type="entry name" value="B2 BRADYKININ RECEPTOR/ANGIOTENSIN II RECEPTOR"/>
    <property type="match status" value="1"/>
</dbReference>
<dbReference type="PANTHER" id="PTHR24228:SF54">
    <property type="entry name" value="MELATONIN RECEPTOR TYPE 1B"/>
    <property type="match status" value="1"/>
</dbReference>
<dbReference type="Pfam" id="PF00001">
    <property type="entry name" value="7tm_1"/>
    <property type="match status" value="1"/>
</dbReference>
<dbReference type="PRINTS" id="PR00237">
    <property type="entry name" value="GPCRRHODOPSN"/>
</dbReference>
<dbReference type="PRINTS" id="PR00857">
    <property type="entry name" value="MELATONINR"/>
</dbReference>
<dbReference type="SMART" id="SM01381">
    <property type="entry name" value="7TM_GPCR_Srsx"/>
    <property type="match status" value="1"/>
</dbReference>
<dbReference type="SUPFAM" id="SSF81321">
    <property type="entry name" value="Family A G protein-coupled receptor-like"/>
    <property type="match status" value="1"/>
</dbReference>
<dbReference type="PROSITE" id="PS00237">
    <property type="entry name" value="G_PROTEIN_RECEP_F1_1"/>
    <property type="match status" value="1"/>
</dbReference>
<dbReference type="PROSITE" id="PS50262">
    <property type="entry name" value="G_PROTEIN_RECEP_F1_2"/>
    <property type="match status" value="1"/>
</dbReference>
<name>MTR1B_RAT</name>
<gene>
    <name evidence="5" type="primary">Mtnr1b</name>
    <name type="synonym">Mt2</name>
</gene>
<proteinExistence type="evidence at transcript level"/>
<keyword id="KW-1003">Cell membrane</keyword>
<keyword id="KW-1015">Disulfide bond</keyword>
<keyword id="KW-0297">G-protein coupled receptor</keyword>
<keyword id="KW-0472">Membrane</keyword>
<keyword id="KW-0675">Receptor</keyword>
<keyword id="KW-1185">Reference proteome</keyword>
<keyword id="KW-0732">Signal</keyword>
<keyword id="KW-0807">Transducer</keyword>
<keyword id="KW-0812">Transmembrane</keyword>
<keyword id="KW-1133">Transmembrane helix</keyword>
<accession>P49287</accession>
<accession>B7X946</accession>
<sequence>MPDNSSIANCCAASGLAARPSWPGSAEAEPPETPRAPWVAPMLSTVVIVTTAVDFVGNLLVILSVLRNRKLRNAGNLFVVNLALADLVVALYPYPLILVAILHDGWVLGEIHCKASAFVMGLSVIGSVFNITAIAINRYWCICHSATYHRACSQWHAPLYISLIWLLTLVALVPNFFVGSLEYDPRIYSCTFIQTASTQYTMAVVAIHFLLPIAVVSFCYLRIWILVLQARRKAKAERKLRLRPSDLRSFLTMFAVFVVFAICWAPLNCIGLAVAINPEAMALQIPEGLFVTSYFLAYFNSCLNAIVYGLLNQNFRREYKRILSALWSTGRCFHDASKCHLTEDLQGPVPPAAMATIPVQEGAL</sequence>
<organism>
    <name type="scientific">Rattus norvegicus</name>
    <name type="common">Rat</name>
    <dbReference type="NCBI Taxonomy" id="10116"/>
    <lineage>
        <taxon>Eukaryota</taxon>
        <taxon>Metazoa</taxon>
        <taxon>Chordata</taxon>
        <taxon>Craniata</taxon>
        <taxon>Vertebrata</taxon>
        <taxon>Euteleostomi</taxon>
        <taxon>Mammalia</taxon>
        <taxon>Eutheria</taxon>
        <taxon>Euarchontoglires</taxon>
        <taxon>Glires</taxon>
        <taxon>Rodentia</taxon>
        <taxon>Myomorpha</taxon>
        <taxon>Muroidea</taxon>
        <taxon>Muridae</taxon>
        <taxon>Murinae</taxon>
        <taxon>Rattus</taxon>
    </lineage>
</organism>
<feature type="signal peptide" evidence="1">
    <location>
        <begin position="1"/>
        <end position="28"/>
    </location>
</feature>
<feature type="chain" id="PRO_0000069872" description="Melatonin receptor type 1B" evidence="1">
    <location>
        <begin position="29"/>
        <end position="364"/>
    </location>
</feature>
<feature type="topological domain" description="Extracellular" evidence="4">
    <location>
        <begin position="29"/>
        <end position="45"/>
    </location>
</feature>
<feature type="transmembrane region" description="Helical; Name=1" evidence="1">
    <location>
        <begin position="46"/>
        <end position="66"/>
    </location>
</feature>
<feature type="topological domain" description="Cytoplasmic" evidence="4">
    <location>
        <begin position="67"/>
        <end position="81"/>
    </location>
</feature>
<feature type="transmembrane region" description="Helical; Name=2" evidence="1">
    <location>
        <begin position="82"/>
        <end position="102"/>
    </location>
</feature>
<feature type="topological domain" description="Extracellular" evidence="4">
    <location>
        <begin position="103"/>
        <end position="115"/>
    </location>
</feature>
<feature type="transmembrane region" description="Helical; Name=3" evidence="1">
    <location>
        <begin position="116"/>
        <end position="136"/>
    </location>
</feature>
<feature type="topological domain" description="Cytoplasmic" evidence="4">
    <location>
        <begin position="137"/>
        <end position="158"/>
    </location>
</feature>
<feature type="transmembrane region" description="Helical; Name=4" evidence="1">
    <location>
        <begin position="159"/>
        <end position="179"/>
    </location>
</feature>
<feature type="topological domain" description="Extracellular" evidence="4">
    <location>
        <begin position="180"/>
        <end position="200"/>
    </location>
</feature>
<feature type="transmembrane region" description="Helical; Name=5" evidence="1">
    <location>
        <begin position="201"/>
        <end position="221"/>
    </location>
</feature>
<feature type="topological domain" description="Cytoplasmic" evidence="4">
    <location>
        <begin position="222"/>
        <end position="255"/>
    </location>
</feature>
<feature type="transmembrane region" description="Helical; Name=6" evidence="1">
    <location>
        <begin position="256"/>
        <end position="276"/>
    </location>
</feature>
<feature type="topological domain" description="Extracellular" evidence="4">
    <location>
        <begin position="277"/>
        <end position="287"/>
    </location>
</feature>
<feature type="transmembrane region" description="Helical; Name=7" evidence="1">
    <location>
        <begin position="288"/>
        <end position="308"/>
    </location>
</feature>
<feature type="topological domain" description="Cytoplasmic" evidence="4">
    <location>
        <begin position="309"/>
        <end position="364"/>
    </location>
</feature>
<feature type="disulfide bond" evidence="2">
    <location>
        <begin position="113"/>
        <end position="190"/>
    </location>
</feature>
<comment type="function">
    <text>High affinity receptor for melatonin. The activity of this receptor is mediated by pertussis toxin sensitive G proteins that inhibits adenylate cyclase activity.</text>
</comment>
<comment type="subcellular location">
    <subcellularLocation>
        <location>Cell membrane</location>
        <topology evidence="1">Multi-pass membrane protein</topology>
    </subcellularLocation>
</comment>
<comment type="tissue specificity">
    <text evidence="3">Expressed in the hippocampus, kidney, and ovary.</text>
</comment>
<comment type="similarity">
    <text evidence="2">Belongs to the G-protein coupled receptor 1 family.</text>
</comment>
<protein>
    <recommendedName>
        <fullName>Melatonin receptor type 1B</fullName>
        <shortName>Mel-1B-R</shortName>
        <shortName>Mel1b receptor</shortName>
    </recommendedName>
</protein>
<reference key="1">
    <citation type="journal article" date="2009" name="J. Physiol. Sci.">
        <title>Gene structures, biochemical characterization and distribution of rat melatonin receptors.</title>
        <authorList>
            <person name="Ishii H."/>
            <person name="Tanaka N."/>
            <person name="Kobayashi M."/>
            <person name="Kato M."/>
            <person name="Sakuma Y."/>
        </authorList>
    </citation>
    <scope>NUCLEOTIDE SEQUENCE [MRNA]</scope>
    <scope>TISSUE SPECIFICITY</scope>
    <scope>FUNCTION</scope>
    <source>
        <strain>Wistar</strain>
        <tissue>Hypothalamus</tissue>
    </source>
</reference>
<reference key="2">
    <citation type="journal article" date="2004" name="Nature">
        <title>Genome sequence of the Brown Norway rat yields insights into mammalian evolution.</title>
        <authorList>
            <person name="Gibbs R.A."/>
            <person name="Weinstock G.M."/>
            <person name="Metzker M.L."/>
            <person name="Muzny D.M."/>
            <person name="Sodergren E.J."/>
            <person name="Scherer S."/>
            <person name="Scott G."/>
            <person name="Steffen D."/>
            <person name="Worley K.C."/>
            <person name="Burch P.E."/>
            <person name="Okwuonu G."/>
            <person name="Hines S."/>
            <person name="Lewis L."/>
            <person name="Deramo C."/>
            <person name="Delgado O."/>
            <person name="Dugan-Rocha S."/>
            <person name="Miner G."/>
            <person name="Morgan M."/>
            <person name="Hawes A."/>
            <person name="Gill R."/>
            <person name="Holt R.A."/>
            <person name="Adams M.D."/>
            <person name="Amanatides P.G."/>
            <person name="Baden-Tillson H."/>
            <person name="Barnstead M."/>
            <person name="Chin S."/>
            <person name="Evans C.A."/>
            <person name="Ferriera S."/>
            <person name="Fosler C."/>
            <person name="Glodek A."/>
            <person name="Gu Z."/>
            <person name="Jennings D."/>
            <person name="Kraft C.L."/>
            <person name="Nguyen T."/>
            <person name="Pfannkoch C.M."/>
            <person name="Sitter C."/>
            <person name="Sutton G.G."/>
            <person name="Venter J.C."/>
            <person name="Woodage T."/>
            <person name="Smith D."/>
            <person name="Lee H.-M."/>
            <person name="Gustafson E."/>
            <person name="Cahill P."/>
            <person name="Kana A."/>
            <person name="Doucette-Stamm L."/>
            <person name="Weinstock K."/>
            <person name="Fechtel K."/>
            <person name="Weiss R.B."/>
            <person name="Dunn D.M."/>
            <person name="Green E.D."/>
            <person name="Blakesley R.W."/>
            <person name="Bouffard G.G."/>
            <person name="De Jong P.J."/>
            <person name="Osoegawa K."/>
            <person name="Zhu B."/>
            <person name="Marra M."/>
            <person name="Schein J."/>
            <person name="Bosdet I."/>
            <person name="Fjell C."/>
            <person name="Jones S."/>
            <person name="Krzywinski M."/>
            <person name="Mathewson C."/>
            <person name="Siddiqui A."/>
            <person name="Wye N."/>
            <person name="McPherson J."/>
            <person name="Zhao S."/>
            <person name="Fraser C.M."/>
            <person name="Shetty J."/>
            <person name="Shatsman S."/>
            <person name="Geer K."/>
            <person name="Chen Y."/>
            <person name="Abramzon S."/>
            <person name="Nierman W.C."/>
            <person name="Havlak P.H."/>
            <person name="Chen R."/>
            <person name="Durbin K.J."/>
            <person name="Egan A."/>
            <person name="Ren Y."/>
            <person name="Song X.-Z."/>
            <person name="Li B."/>
            <person name="Liu Y."/>
            <person name="Qin X."/>
            <person name="Cawley S."/>
            <person name="Cooney A.J."/>
            <person name="D'Souza L.M."/>
            <person name="Martin K."/>
            <person name="Wu J.Q."/>
            <person name="Gonzalez-Garay M.L."/>
            <person name="Jackson A.R."/>
            <person name="Kalafus K.J."/>
            <person name="McLeod M.P."/>
            <person name="Milosavljevic A."/>
            <person name="Virk D."/>
            <person name="Volkov A."/>
            <person name="Wheeler D.A."/>
            <person name="Zhang Z."/>
            <person name="Bailey J.A."/>
            <person name="Eichler E.E."/>
            <person name="Tuzun E."/>
            <person name="Birney E."/>
            <person name="Mongin E."/>
            <person name="Ureta-Vidal A."/>
            <person name="Woodwark C."/>
            <person name="Zdobnov E."/>
            <person name="Bork P."/>
            <person name="Suyama M."/>
            <person name="Torrents D."/>
            <person name="Alexandersson M."/>
            <person name="Trask B.J."/>
            <person name="Young J.M."/>
            <person name="Huang H."/>
            <person name="Wang H."/>
            <person name="Xing H."/>
            <person name="Daniels S."/>
            <person name="Gietzen D."/>
            <person name="Schmidt J."/>
            <person name="Stevens K."/>
            <person name="Vitt U."/>
            <person name="Wingrove J."/>
            <person name="Camara F."/>
            <person name="Mar Alba M."/>
            <person name="Abril J.F."/>
            <person name="Guigo R."/>
            <person name="Smit A."/>
            <person name="Dubchak I."/>
            <person name="Rubin E.M."/>
            <person name="Couronne O."/>
            <person name="Poliakov A."/>
            <person name="Huebner N."/>
            <person name="Ganten D."/>
            <person name="Goesele C."/>
            <person name="Hummel O."/>
            <person name="Kreitler T."/>
            <person name="Lee Y.-A."/>
            <person name="Monti J."/>
            <person name="Schulz H."/>
            <person name="Zimdahl H."/>
            <person name="Himmelbauer H."/>
            <person name="Lehrach H."/>
            <person name="Jacob H.J."/>
            <person name="Bromberg S."/>
            <person name="Gullings-Handley J."/>
            <person name="Jensen-Seaman M.I."/>
            <person name="Kwitek A.E."/>
            <person name="Lazar J."/>
            <person name="Pasko D."/>
            <person name="Tonellato P.J."/>
            <person name="Twigger S."/>
            <person name="Ponting C.P."/>
            <person name="Duarte J.M."/>
            <person name="Rice S."/>
            <person name="Goodstadt L."/>
            <person name="Beatson S.A."/>
            <person name="Emes R.D."/>
            <person name="Winter E.E."/>
            <person name="Webber C."/>
            <person name="Brandt P."/>
            <person name="Nyakatura G."/>
            <person name="Adetobi M."/>
            <person name="Chiaromonte F."/>
            <person name="Elnitski L."/>
            <person name="Eswara P."/>
            <person name="Hardison R.C."/>
            <person name="Hou M."/>
            <person name="Kolbe D."/>
            <person name="Makova K."/>
            <person name="Miller W."/>
            <person name="Nekrutenko A."/>
            <person name="Riemer C."/>
            <person name="Schwartz S."/>
            <person name="Taylor J."/>
            <person name="Yang S."/>
            <person name="Zhang Y."/>
            <person name="Lindpaintner K."/>
            <person name="Andrews T.D."/>
            <person name="Caccamo M."/>
            <person name="Clamp M."/>
            <person name="Clarke L."/>
            <person name="Curwen V."/>
            <person name="Durbin R.M."/>
            <person name="Eyras E."/>
            <person name="Searle S.M."/>
            <person name="Cooper G.M."/>
            <person name="Batzoglou S."/>
            <person name="Brudno M."/>
            <person name="Sidow A."/>
            <person name="Stone E.A."/>
            <person name="Payseur B.A."/>
            <person name="Bourque G."/>
            <person name="Lopez-Otin C."/>
            <person name="Puente X.S."/>
            <person name="Chakrabarti K."/>
            <person name="Chatterji S."/>
            <person name="Dewey C."/>
            <person name="Pachter L."/>
            <person name="Bray N."/>
            <person name="Yap V.B."/>
            <person name="Caspi A."/>
            <person name="Tesler G."/>
            <person name="Pevzner P.A."/>
            <person name="Haussler D."/>
            <person name="Roskin K.M."/>
            <person name="Baertsch R."/>
            <person name="Clawson H."/>
            <person name="Furey T.S."/>
            <person name="Hinrichs A.S."/>
            <person name="Karolchik D."/>
            <person name="Kent W.J."/>
            <person name="Rosenbloom K.R."/>
            <person name="Trumbower H."/>
            <person name="Weirauch M."/>
            <person name="Cooper D.N."/>
            <person name="Stenson P.D."/>
            <person name="Ma B."/>
            <person name="Brent M."/>
            <person name="Arumugam M."/>
            <person name="Shteynberg D."/>
            <person name="Copley R.R."/>
            <person name="Taylor M.S."/>
            <person name="Riethman H."/>
            <person name="Mudunuri U."/>
            <person name="Peterson J."/>
            <person name="Guyer M."/>
            <person name="Felsenfeld A."/>
            <person name="Old S."/>
            <person name="Mockrin S."/>
            <person name="Collins F.S."/>
        </authorList>
    </citation>
    <scope>NUCLEOTIDE SEQUENCE [LARGE SCALE GENOMIC DNA]</scope>
    <source>
        <strain>Brown Norway</strain>
    </source>
</reference>
<reference key="3">
    <citation type="submission" date="2005-09" db="EMBL/GenBank/DDBJ databases">
        <authorList>
            <person name="Mural R.J."/>
            <person name="Adams M.D."/>
            <person name="Myers E.W."/>
            <person name="Smith H.O."/>
            <person name="Venter J.C."/>
        </authorList>
    </citation>
    <scope>NUCLEOTIDE SEQUENCE [LARGE SCALE GENOMIC DNA]</scope>
</reference>
<reference key="4">
    <citation type="journal article" date="1995" name="Proc. Natl. Acad. Sci. U.S.A.">
        <title>Molecular characterization of a second melatonin receptor expressed in human retina and brain: the Mel1b melatonin receptor.</title>
        <authorList>
            <person name="Reppert S.M."/>
            <person name="Godson C."/>
            <person name="Mahle C.D."/>
            <person name="Weaver D.R."/>
            <person name="Slaugenhaupt S.A."/>
            <person name="Gusella J.F."/>
        </authorList>
    </citation>
    <scope>NUCLEOTIDE SEQUENCE [GENOMIC DNA] OF 139-258</scope>
    <source>
        <strain>Sprague-Dawley</strain>
    </source>
</reference>